<protein>
    <recommendedName>
        <fullName evidence="1">Large ribosomal subunit protein uL24</fullName>
    </recommendedName>
    <alternativeName>
        <fullName evidence="2">50S ribosomal protein L24</fullName>
    </alternativeName>
</protein>
<reference key="1">
    <citation type="journal article" date="2000" name="DNA Res.">
        <title>Complete genome structure of the nitrogen-fixing symbiotic bacterium Mesorhizobium loti.</title>
        <authorList>
            <person name="Kaneko T."/>
            <person name="Nakamura Y."/>
            <person name="Sato S."/>
            <person name="Asamizu E."/>
            <person name="Kato T."/>
            <person name="Sasamoto S."/>
            <person name="Watanabe A."/>
            <person name="Idesawa K."/>
            <person name="Ishikawa A."/>
            <person name="Kawashima K."/>
            <person name="Kimura T."/>
            <person name="Kishida Y."/>
            <person name="Kiyokawa C."/>
            <person name="Kohara M."/>
            <person name="Matsumoto M."/>
            <person name="Matsuno A."/>
            <person name="Mochizuki Y."/>
            <person name="Nakayama S."/>
            <person name="Nakazaki N."/>
            <person name="Shimpo S."/>
            <person name="Sugimoto M."/>
            <person name="Takeuchi C."/>
            <person name="Yamada M."/>
            <person name="Tabata S."/>
        </authorList>
    </citation>
    <scope>NUCLEOTIDE SEQUENCE [LARGE SCALE GENOMIC DNA]</scope>
    <source>
        <strain>LMG 29417 / CECT 9101 / MAFF 303099</strain>
    </source>
</reference>
<dbReference type="EMBL" id="BA000012">
    <property type="protein sequence ID" value="BAB47917.1"/>
    <property type="molecule type" value="Genomic_DNA"/>
</dbReference>
<dbReference type="RefSeq" id="WP_006205456.1">
    <property type="nucleotide sequence ID" value="NC_002678.2"/>
</dbReference>
<dbReference type="SMR" id="Q98N46"/>
<dbReference type="GeneID" id="66684205"/>
<dbReference type="KEGG" id="mlo:mlr0306"/>
<dbReference type="eggNOG" id="COG0198">
    <property type="taxonomic scope" value="Bacteria"/>
</dbReference>
<dbReference type="HOGENOM" id="CLU_093315_2_2_5"/>
<dbReference type="Proteomes" id="UP000000552">
    <property type="component" value="Chromosome"/>
</dbReference>
<dbReference type="GO" id="GO:1990904">
    <property type="term" value="C:ribonucleoprotein complex"/>
    <property type="evidence" value="ECO:0007669"/>
    <property type="project" value="UniProtKB-KW"/>
</dbReference>
<dbReference type="GO" id="GO:0005840">
    <property type="term" value="C:ribosome"/>
    <property type="evidence" value="ECO:0007669"/>
    <property type="project" value="UniProtKB-KW"/>
</dbReference>
<dbReference type="GO" id="GO:0019843">
    <property type="term" value="F:rRNA binding"/>
    <property type="evidence" value="ECO:0007669"/>
    <property type="project" value="UniProtKB-UniRule"/>
</dbReference>
<dbReference type="GO" id="GO:0003735">
    <property type="term" value="F:structural constituent of ribosome"/>
    <property type="evidence" value="ECO:0007669"/>
    <property type="project" value="InterPro"/>
</dbReference>
<dbReference type="GO" id="GO:0006412">
    <property type="term" value="P:translation"/>
    <property type="evidence" value="ECO:0007669"/>
    <property type="project" value="UniProtKB-UniRule"/>
</dbReference>
<dbReference type="CDD" id="cd06089">
    <property type="entry name" value="KOW_RPL26"/>
    <property type="match status" value="1"/>
</dbReference>
<dbReference type="FunFam" id="2.30.30.30:FF:000004">
    <property type="entry name" value="50S ribosomal protein L24"/>
    <property type="match status" value="1"/>
</dbReference>
<dbReference type="Gene3D" id="2.30.30.30">
    <property type="match status" value="1"/>
</dbReference>
<dbReference type="HAMAP" id="MF_01326_B">
    <property type="entry name" value="Ribosomal_uL24_B"/>
    <property type="match status" value="1"/>
</dbReference>
<dbReference type="InterPro" id="IPR005824">
    <property type="entry name" value="KOW"/>
</dbReference>
<dbReference type="InterPro" id="IPR014722">
    <property type="entry name" value="Rib_uL2_dom2"/>
</dbReference>
<dbReference type="InterPro" id="IPR003256">
    <property type="entry name" value="Ribosomal_uL24"/>
</dbReference>
<dbReference type="InterPro" id="IPR005825">
    <property type="entry name" value="Ribosomal_uL24_CS"/>
</dbReference>
<dbReference type="InterPro" id="IPR041988">
    <property type="entry name" value="Ribosomal_uL24_KOW"/>
</dbReference>
<dbReference type="InterPro" id="IPR008991">
    <property type="entry name" value="Translation_prot_SH3-like_sf"/>
</dbReference>
<dbReference type="NCBIfam" id="TIGR01079">
    <property type="entry name" value="rplX_bact"/>
    <property type="match status" value="1"/>
</dbReference>
<dbReference type="PANTHER" id="PTHR12903">
    <property type="entry name" value="MITOCHONDRIAL RIBOSOMAL PROTEIN L24"/>
    <property type="match status" value="1"/>
</dbReference>
<dbReference type="Pfam" id="PF00467">
    <property type="entry name" value="KOW"/>
    <property type="match status" value="1"/>
</dbReference>
<dbReference type="Pfam" id="PF17136">
    <property type="entry name" value="ribosomal_L24"/>
    <property type="match status" value="1"/>
</dbReference>
<dbReference type="SMART" id="SM00739">
    <property type="entry name" value="KOW"/>
    <property type="match status" value="1"/>
</dbReference>
<dbReference type="SUPFAM" id="SSF50104">
    <property type="entry name" value="Translation proteins SH3-like domain"/>
    <property type="match status" value="1"/>
</dbReference>
<dbReference type="PROSITE" id="PS01108">
    <property type="entry name" value="RIBOSOMAL_L24"/>
    <property type="match status" value="1"/>
</dbReference>
<accession>Q98N46</accession>
<name>RL24_RHILO</name>
<comment type="function">
    <text evidence="1">One of two assembly initiator proteins, it binds directly to the 5'-end of the 23S rRNA, where it nucleates assembly of the 50S subunit.</text>
</comment>
<comment type="function">
    <text evidence="1">One of the proteins that surrounds the polypeptide exit tunnel on the outside of the subunit.</text>
</comment>
<comment type="subunit">
    <text evidence="1">Part of the 50S ribosomal subunit.</text>
</comment>
<comment type="similarity">
    <text evidence="1">Belongs to the universal ribosomal protein uL24 family.</text>
</comment>
<evidence type="ECO:0000255" key="1">
    <source>
        <dbReference type="HAMAP-Rule" id="MF_01326"/>
    </source>
</evidence>
<evidence type="ECO:0000305" key="2"/>
<proteinExistence type="inferred from homology"/>
<organism>
    <name type="scientific">Mesorhizobium japonicum (strain LMG 29417 / CECT 9101 / MAFF 303099)</name>
    <name type="common">Mesorhizobium loti (strain MAFF 303099)</name>
    <dbReference type="NCBI Taxonomy" id="266835"/>
    <lineage>
        <taxon>Bacteria</taxon>
        <taxon>Pseudomonadati</taxon>
        <taxon>Pseudomonadota</taxon>
        <taxon>Alphaproteobacteria</taxon>
        <taxon>Hyphomicrobiales</taxon>
        <taxon>Phyllobacteriaceae</taxon>
        <taxon>Mesorhizobium</taxon>
    </lineage>
</organism>
<sequence length="104" mass="11332">MQKIRKGDKVVVLAGKDKGRSGEVLSVQPKDDTALVRGVNMIRRHQKQSQSQEGGIITKEAPIQLSNIALADPKDGKPTRVGFIFQKDGKKVRVAKRSGEVING</sequence>
<keyword id="KW-0687">Ribonucleoprotein</keyword>
<keyword id="KW-0689">Ribosomal protein</keyword>
<keyword id="KW-0694">RNA-binding</keyword>
<keyword id="KW-0699">rRNA-binding</keyword>
<feature type="chain" id="PRO_0000130701" description="Large ribosomal subunit protein uL24">
    <location>
        <begin position="1"/>
        <end position="104"/>
    </location>
</feature>
<gene>
    <name evidence="1" type="primary">rplX</name>
    <name type="ordered locus">mlr0306</name>
</gene>